<organism>
    <name type="scientific">KI polyomavirus (isolate Stockholm 60)</name>
    <name type="common">KIPyV</name>
    <dbReference type="NCBI Taxonomy" id="423446"/>
    <lineage>
        <taxon>Viruses</taxon>
        <taxon>Monodnaviria</taxon>
        <taxon>Shotokuvirae</taxon>
        <taxon>Cossaviricota</taxon>
        <taxon>Papovaviricetes</taxon>
        <taxon>Sepolyvirales</taxon>
        <taxon>Polyomaviridae</taxon>
        <taxon>Betapolyomavirus</taxon>
        <taxon>Betapolyomavirus tertihominis</taxon>
    </lineage>
</organism>
<proteinExistence type="evidence at protein level"/>
<dbReference type="EC" id="5.6.2.4" evidence="1"/>
<dbReference type="EMBL" id="EF127906">
    <property type="protein sequence ID" value="ABN09921.1"/>
    <property type="molecule type" value="Genomic_DNA"/>
</dbReference>
<dbReference type="PDB" id="8Q8K">
    <property type="method" value="X-ray"/>
    <property type="resolution" value="2.70 A"/>
    <property type="chains" value="C/D=119-140"/>
</dbReference>
<dbReference type="PDBsum" id="8Q8K"/>
<dbReference type="SMR" id="P0DOI6"/>
<dbReference type="KEGG" id="vg:5076884"/>
<dbReference type="Proteomes" id="UP000107189">
    <property type="component" value="Genome"/>
</dbReference>
<dbReference type="GO" id="GO:0042025">
    <property type="term" value="C:host cell nucleus"/>
    <property type="evidence" value="ECO:0007669"/>
    <property type="project" value="UniProtKB-SubCell"/>
</dbReference>
<dbReference type="GO" id="GO:0005524">
    <property type="term" value="F:ATP binding"/>
    <property type="evidence" value="ECO:0007669"/>
    <property type="project" value="UniProtKB-KW"/>
</dbReference>
<dbReference type="GO" id="GO:0016887">
    <property type="term" value="F:ATP hydrolysis activity"/>
    <property type="evidence" value="ECO:0007669"/>
    <property type="project" value="RHEA"/>
</dbReference>
<dbReference type="GO" id="GO:0003688">
    <property type="term" value="F:DNA replication origin binding"/>
    <property type="evidence" value="ECO:0007669"/>
    <property type="project" value="InterPro"/>
</dbReference>
<dbReference type="GO" id="GO:0004386">
    <property type="term" value="F:helicase activity"/>
    <property type="evidence" value="ECO:0007669"/>
    <property type="project" value="UniProtKB-KW"/>
</dbReference>
<dbReference type="GO" id="GO:0008270">
    <property type="term" value="F:zinc ion binding"/>
    <property type="evidence" value="ECO:0007669"/>
    <property type="project" value="UniProtKB-KW"/>
</dbReference>
<dbReference type="GO" id="GO:0006260">
    <property type="term" value="P:DNA replication"/>
    <property type="evidence" value="ECO:0007669"/>
    <property type="project" value="UniProtKB-KW"/>
</dbReference>
<dbReference type="GO" id="GO:0039645">
    <property type="term" value="P:symbiont-mediated perturbation of host cell cycle G1/S transition checkpoint"/>
    <property type="evidence" value="ECO:0007669"/>
    <property type="project" value="UniProtKB-KW"/>
</dbReference>
<dbReference type="GO" id="GO:0052170">
    <property type="term" value="P:symbiont-mediated suppression of host innate immune response"/>
    <property type="evidence" value="ECO:0007669"/>
    <property type="project" value="UniProtKB-KW"/>
</dbReference>
<dbReference type="GO" id="GO:0039576">
    <property type="term" value="P:symbiont-mediated suppression of host JAK-STAT cascade via inhibition of JAK1 activity"/>
    <property type="evidence" value="ECO:0007669"/>
    <property type="project" value="UniProtKB-KW"/>
</dbReference>
<dbReference type="GO" id="GO:0039502">
    <property type="term" value="P:symbiont-mediated suppression of host type I interferon-mediated signaling pathway"/>
    <property type="evidence" value="ECO:0007669"/>
    <property type="project" value="UniProtKB-KW"/>
</dbReference>
<dbReference type="Gene3D" id="3.40.1310.20">
    <property type="match status" value="1"/>
</dbReference>
<dbReference type="Gene3D" id="1.10.287.110">
    <property type="entry name" value="DnaJ domain"/>
    <property type="match status" value="1"/>
</dbReference>
<dbReference type="Gene3D" id="1.20.1050.70">
    <property type="entry name" value="Large T antigen, SV40, domain 3"/>
    <property type="match status" value="1"/>
</dbReference>
<dbReference type="Gene3D" id="3.40.50.300">
    <property type="entry name" value="P-loop containing nucleotide triphosphate hydrolases"/>
    <property type="match status" value="1"/>
</dbReference>
<dbReference type="Gene3D" id="1.10.10.510">
    <property type="entry name" value="Zinc finger, large T-antigen D1 domain"/>
    <property type="match status" value="1"/>
</dbReference>
<dbReference type="InterPro" id="IPR001623">
    <property type="entry name" value="DnaJ_domain"/>
</dbReference>
<dbReference type="InterPro" id="IPR014015">
    <property type="entry name" value="Helicase_SF3_DNA-vir"/>
</dbReference>
<dbReference type="InterPro" id="IPR036869">
    <property type="entry name" value="J_dom_sf"/>
</dbReference>
<dbReference type="InterPro" id="IPR016392">
    <property type="entry name" value="Lg_T_Ag_polyomavir"/>
</dbReference>
<dbReference type="InterPro" id="IPR010932">
    <property type="entry name" value="Lg_T_Ag_Polyomavir_C"/>
</dbReference>
<dbReference type="InterPro" id="IPR027417">
    <property type="entry name" value="P-loop_NTPase"/>
</dbReference>
<dbReference type="InterPro" id="IPR003133">
    <property type="entry name" value="T_Ag_DNA-bd"/>
</dbReference>
<dbReference type="InterPro" id="IPR017910">
    <property type="entry name" value="Znf_lg_T-Ag_D1-typ"/>
</dbReference>
<dbReference type="InterPro" id="IPR037102">
    <property type="entry name" value="Znf_lg_T-Ag_D1_dom_sf"/>
</dbReference>
<dbReference type="Pfam" id="PF06431">
    <property type="entry name" value="Polyoma_lg_T_C"/>
    <property type="match status" value="1"/>
</dbReference>
<dbReference type="Pfam" id="PF02217">
    <property type="entry name" value="T_Ag_DNA_bind"/>
    <property type="match status" value="1"/>
</dbReference>
<dbReference type="PIRSF" id="PIRSF003368">
    <property type="entry name" value="Large_T_antigen_polyomaV"/>
    <property type="match status" value="1"/>
</dbReference>
<dbReference type="SMART" id="SM00271">
    <property type="entry name" value="DnaJ"/>
    <property type="match status" value="1"/>
</dbReference>
<dbReference type="SUPFAM" id="SSF46565">
    <property type="entry name" value="Chaperone J-domain"/>
    <property type="match status" value="1"/>
</dbReference>
<dbReference type="SUPFAM" id="SSF55464">
    <property type="entry name" value="Origin of replication-binding domain, RBD-like"/>
    <property type="match status" value="1"/>
</dbReference>
<dbReference type="SUPFAM" id="SSF52540">
    <property type="entry name" value="P-loop containing nucleoside triphosphate hydrolases"/>
    <property type="match status" value="1"/>
</dbReference>
<dbReference type="PROSITE" id="PS51206">
    <property type="entry name" value="SF3_HELICASE_1"/>
    <property type="match status" value="1"/>
</dbReference>
<dbReference type="PROSITE" id="PS51287">
    <property type="entry name" value="T_AG_OBD"/>
    <property type="match status" value="1"/>
</dbReference>
<dbReference type="PROSITE" id="PS51341">
    <property type="entry name" value="ZF_LTAG_D1"/>
    <property type="match status" value="1"/>
</dbReference>
<organismHost>
    <name type="scientific">Homo sapiens</name>
    <name type="common">Human</name>
    <dbReference type="NCBI Taxonomy" id="9606"/>
</organismHost>
<accession>P0DOI6</accession>
<accession>A3R4M9</accession>
<accession>A3R4N4</accession>
<accession>A3R4N9</accession>
<protein>
    <recommendedName>
        <fullName>Large T antigen</fullName>
        <shortName>LT</shortName>
        <shortName>LT-AG</shortName>
        <ecNumber evidence="1">5.6.2.4</ecNumber>
    </recommendedName>
    <alternativeName>
        <fullName evidence="6">DNA 3'-5' helicase large T antigen</fullName>
    </alternativeName>
</protein>
<reference key="1">
    <citation type="journal article" date="2007" name="J. Virol.">
        <title>Identification of a third human polyomavirus.</title>
        <authorList>
            <person name="Allander T."/>
            <person name="Andreasson K."/>
            <person name="Gupta S."/>
            <person name="Bjerkner A."/>
            <person name="Bogdanovic G."/>
            <person name="Persson M.A."/>
            <person name="Dalianis T."/>
            <person name="Ramqvist T."/>
            <person name="Andersson B."/>
        </authorList>
    </citation>
    <scope>NUCLEOTIDE SEQUENCE [GENOMIC DNA]</scope>
</reference>
<comment type="function">
    <text evidence="1">Isoform large T antigen is a key early protein essential for both driving viral replication and inducing cellular transformation. Plays a role in viral genome replication by driving entry of quiescent cells into the cell cycle and by autoregulating the synthesis of viral early mRNA. Displays highly oncogenic activities by corrupting the host cellular checkpoint mechanisms that guard cell division and the transcription, replication, and repair of DNA. Participates in the modulation of cellular gene expression preceeding viral DNA replication. This step involves binding to host key cell cycle regulators retinoblastoma protein RB1/pRb and TP53. Induces the disassembly of host E2F1 transcription factors from RB1, thus promoting transcriptional activation of E2F1-regulated S-phase genes. Inhibits host TP53 binding to DNA, abrogating the ability of TP53 to stimulate gene expression. Plays the role of a TFIID-associated factor (TAF) in transcription initiation for all three RNA polymerases, by stabilizing the TBP-TFIIA complex on promoters. Initiates viral DNA replication and unwinding via interactions with the viral origin of replication. Binds two adjacent sites in the SV40 origin. The replication fork movement is facilitated by Large T antigen helicase activity. Has processive 3'-5' DNA helicase activity which requires a short 3' single-stranded region and ATP. Activates the transcription of viral late mRNA, through host TBP and TFIIA stabilization. Interferes with histone deacetylation mediated by HDAC1, leading to activation of transcription.</text>
</comment>
<comment type="catalytic activity">
    <reaction evidence="1">
        <text>Couples ATP hydrolysis with the unwinding of duplex DNA by translocating in the 3'-5' direction.</text>
        <dbReference type="EC" id="5.6.2.4"/>
    </reaction>
</comment>
<comment type="catalytic activity">
    <reaction evidence="1">
        <text>ATP + H2O = ADP + phosphate + H(+)</text>
        <dbReference type="Rhea" id="RHEA:13065"/>
        <dbReference type="ChEBI" id="CHEBI:15377"/>
        <dbReference type="ChEBI" id="CHEBI:15378"/>
        <dbReference type="ChEBI" id="CHEBI:30616"/>
        <dbReference type="ChEBI" id="CHEBI:43474"/>
        <dbReference type="ChEBI" id="CHEBI:456216"/>
        <dbReference type="EC" id="5.6.2.4"/>
    </reaction>
</comment>
<comment type="cofactor">
    <cofactor evidence="1">
        <name>Mg(2+)</name>
        <dbReference type="ChEBI" id="CHEBI:18420"/>
    </cofactor>
    <text evidence="1">DNA helicase activity requires Mg(2+).</text>
</comment>
<comment type="subunit">
    <text evidence="1">Forms homohexamers in the presence of ATP. Interacts with host HDAC1. Interacts (via LXCXE domain) with host RB1; the interaction induces the aberrant dissociation of RB1-E2F1 complex thereby disrupting RB1's activity. Interacts (via LXCXE domain) with host pRB-related proteins RBL1 and RBL2. Interacts (via C-terminus) with host TOP1 and POLA1 allowing DNA replication. Interacts with host TP53, inhibiting TP53 binding to DNA. Interacts with host preinitiation complex components TBP, TFIIA and TFIID to regulate transcription initiation.</text>
</comment>
<comment type="subcellular location">
    <subcellularLocation>
        <location evidence="1">Host nucleus</location>
    </subcellularLocation>
</comment>
<comment type="alternative products">
    <event type="alternative splicing"/>
    <isoform>
        <id>P0DOI6-1</id>
        <id>A3R4N4-1</id>
        <name>Large T antigen</name>
        <sequence type="displayed"/>
    </isoform>
    <isoform>
        <id>P0DOI9-1</id>
        <id>A3R4N5-1</id>
        <name>Small t antigen</name>
        <sequence type="external"/>
    </isoform>
</comment>
<comment type="domain">
    <text evidence="1">The J domain is essential for multiple viral activities, including virion assembly, viral DNA replication, transformation and transcriptional activation.</text>
</comment>
<comment type="domain">
    <text evidence="1">The LXCXE motif specifically binds to host pRB, RBL1, and RBL2.</text>
</comment>
<comment type="domain">
    <text evidence="1">The zinc finger region contributes to protein-protein interactions essential for the assembly of stable T-antigen hexamers at the origin of replication. The hexamers are required for subsequent alterations in the structure of origin DNA.</text>
</comment>
<comment type="domain">
    <text evidence="1">The ATP binding/ATPase domain is required for proper hexamer assembly and helicase activity.</text>
</comment>
<comment type="PTM">
    <text evidence="1">Phosphorylated on both serine and threonine residues. Small t antigen inhibits the dephosphorylation by the AC form of PP2A.</text>
</comment>
<comment type="PTM">
    <text evidence="1">O-Glycosylated near the C-terminal region.</text>
</comment>
<comment type="PTM">
    <text evidence="1">Acetylated by CBP in a TP53-dependent manner.</text>
</comment>
<evidence type="ECO:0000250" key="1">
    <source>
        <dbReference type="UniProtKB" id="P03070"/>
    </source>
</evidence>
<evidence type="ECO:0000255" key="2">
    <source>
        <dbReference type="PROSITE-ProRule" id="PRU00551"/>
    </source>
</evidence>
<evidence type="ECO:0000255" key="3">
    <source>
        <dbReference type="PROSITE-ProRule" id="PRU00620"/>
    </source>
</evidence>
<evidence type="ECO:0000255" key="4">
    <source>
        <dbReference type="PROSITE-ProRule" id="PRU00671"/>
    </source>
</evidence>
<evidence type="ECO:0000256" key="5">
    <source>
        <dbReference type="SAM" id="MobiDB-lite"/>
    </source>
</evidence>
<evidence type="ECO:0000305" key="6"/>
<sequence>MDKTLSREEAKQLMQLLCLDMSCWGNLPLMRRQYLVKCKEYHPDKGGNEESMKLLNSLYLKLQDSVSSVHDLNEEEDNIWQSSQIPTYGTPDWDEWWSQFNTYWEEELRCNESMPSSPKRSAPEEEPSCSQATPPKKKHAFDASLEFPKELLEFVSHAVFSNKCITCFVVHTTREKGEVLYKKLLQKYQCSFISKHAFYNTVLIFFLTPHKHRVSAINNFCKGHCTVSFLFCKGVNNPYGLYSRMCRQPFNLCEENIPGGLKENEFNPEDLFGEPKEPSLSWNQIANFALEFDIDDVYYLLGSYIRFATKPEECEKCSKNDDATHKRVHVQNHENAVLLQESKSQKNACTQAIDRVIAERRYNCLTLTRKKLLTKRFKKLFNEMDKIVVGERKILLYMASIAWYTGLNKKIDELVVRFLKLIVDNKPKHRYWLFKGPINSGKTTLATALLNLCGGKALNINIPSEKLPFELGVALDQYMVVFEDVKGQIGIEKQLPSGNGVNNLDNLRDYLDGCVEVNLEKKHVNKRSQIFPPGIVTMNEYCIPETVAVRFEKTVMFTIKRNLRESLEKTPQLLSQRILHSGIAMLLLLIWYRPVSDFDEEIQSNVVYWKEVLDNYIGLTEFATMQMNVTNGKNILEKWFE</sequence>
<name>LT_POVK6</name>
<feature type="chain" id="PRO_0000442714" description="Large T antigen">
    <location>
        <begin position="1"/>
        <end position="641"/>
    </location>
</feature>
<feature type="domain" description="J">
    <location>
        <begin position="12"/>
        <end position="80"/>
    </location>
</feature>
<feature type="domain" description="SF3 helicase" evidence="2">
    <location>
        <begin position="410"/>
        <end position="572"/>
    </location>
</feature>
<feature type="DNA-binding region" description="T-ag OBD" evidence="3">
    <location>
        <begin position="148"/>
        <end position="263"/>
    </location>
</feature>
<feature type="zinc finger region" description="T-ag D1-type" evidence="4">
    <location>
        <begin position="277"/>
        <end position="369"/>
    </location>
</feature>
<feature type="region of interest" description="Disordered" evidence="5">
    <location>
        <begin position="114"/>
        <end position="136"/>
    </location>
</feature>
<feature type="short sequence motif" description="LXCXE motif" evidence="1">
    <location>
        <begin position="108"/>
        <end position="112"/>
    </location>
</feature>
<feature type="short sequence motif" description="Nuclear localization signal" evidence="1">
    <location>
        <begin position="134"/>
        <end position="141"/>
    </location>
</feature>
<feature type="binding site" evidence="4">
    <location>
        <position position="314"/>
    </location>
    <ligand>
        <name>Zn(2+)</name>
        <dbReference type="ChEBI" id="CHEBI:29105"/>
    </ligand>
</feature>
<feature type="binding site" evidence="4">
    <location>
        <position position="317"/>
    </location>
    <ligand>
        <name>Zn(2+)</name>
        <dbReference type="ChEBI" id="CHEBI:29105"/>
    </ligand>
</feature>
<feature type="binding site" evidence="4">
    <location>
        <position position="325"/>
    </location>
    <ligand>
        <name>Zn(2+)</name>
        <dbReference type="ChEBI" id="CHEBI:29105"/>
    </ligand>
</feature>
<feature type="binding site" evidence="4">
    <location>
        <position position="329"/>
    </location>
    <ligand>
        <name>Zn(2+)</name>
        <dbReference type="ChEBI" id="CHEBI:29105"/>
    </ligand>
</feature>
<feature type="binding site" evidence="2">
    <location>
        <begin position="436"/>
        <end position="443"/>
    </location>
    <ligand>
        <name>ATP</name>
        <dbReference type="ChEBI" id="CHEBI:30616"/>
    </ligand>
</feature>
<feature type="modified residue" description="N-acetylmethionine; by host" evidence="1">
    <location>
        <position position="1"/>
    </location>
</feature>
<feature type="modified residue" description="Phosphoserine; by host" evidence="1">
    <location>
        <position position="117"/>
    </location>
</feature>
<feature type="modified residue" description="Phosphothreonine; by host" evidence="1">
    <location>
        <position position="133"/>
    </location>
</feature>
<keyword id="KW-0002">3D-structure</keyword>
<keyword id="KW-0007">Acetylation</keyword>
<keyword id="KW-0025">Alternative splicing</keyword>
<keyword id="KW-0067">ATP-binding</keyword>
<keyword id="KW-0235">DNA replication</keyword>
<keyword id="KW-0238">DNA-binding</keyword>
<keyword id="KW-0244">Early protein</keyword>
<keyword id="KW-1078">G1/S host cell cycle checkpoint dysregulation by virus</keyword>
<keyword id="KW-0347">Helicase</keyword>
<keyword id="KW-1048">Host nucleus</keyword>
<keyword id="KW-0945">Host-virus interaction</keyword>
<keyword id="KW-0378">Hydrolase</keyword>
<keyword id="KW-1090">Inhibition of host innate immune response by virus</keyword>
<keyword id="KW-1114">Inhibition of host interferon signaling pathway by virus</keyword>
<keyword id="KW-1096">Inhibition of host JAK1 by virus</keyword>
<keyword id="KW-0922">Interferon antiviral system evasion</keyword>
<keyword id="KW-0413">Isomerase</keyword>
<keyword id="KW-0460">Magnesium</keyword>
<keyword id="KW-0479">Metal-binding</keyword>
<keyword id="KW-1121">Modulation of host cell cycle by virus</keyword>
<keyword id="KW-0547">Nucleotide-binding</keyword>
<keyword id="KW-0553">Oncogene</keyword>
<keyword id="KW-0597">Phosphoprotein</keyword>
<keyword id="KW-0899">Viral immunoevasion</keyword>
<keyword id="KW-0862">Zinc</keyword>
<keyword id="KW-0863">Zinc-finger</keyword>